<gene>
    <name type="ordered locus">HAPS_0158</name>
</gene>
<evidence type="ECO:0000255" key="1">
    <source>
        <dbReference type="HAMAP-Rule" id="MF_01016"/>
    </source>
</evidence>
<protein>
    <recommendedName>
        <fullName evidence="1">Putative transport protein HAPS_0158</fullName>
    </recommendedName>
</protein>
<organism>
    <name type="scientific">Glaesserella parasuis serovar 5 (strain SH0165)</name>
    <name type="common">Haemophilus parasuis</name>
    <dbReference type="NCBI Taxonomy" id="557723"/>
    <lineage>
        <taxon>Bacteria</taxon>
        <taxon>Pseudomonadati</taxon>
        <taxon>Pseudomonadota</taxon>
        <taxon>Gammaproteobacteria</taxon>
        <taxon>Pasteurellales</taxon>
        <taxon>Pasteurellaceae</taxon>
        <taxon>Glaesserella</taxon>
    </lineage>
</organism>
<reference key="1">
    <citation type="journal article" date="2009" name="J. Bacteriol.">
        <title>Complete genome sequence of Haemophilus parasuis SH0165.</title>
        <authorList>
            <person name="Yue M."/>
            <person name="Yang F."/>
            <person name="Yang J."/>
            <person name="Bei W."/>
            <person name="Cai X."/>
            <person name="Chen L."/>
            <person name="Dong J."/>
            <person name="Zhou R."/>
            <person name="Jin M."/>
            <person name="Jin Q."/>
            <person name="Chen H."/>
        </authorList>
    </citation>
    <scope>NUCLEOTIDE SEQUENCE [LARGE SCALE GENOMIC DNA]</scope>
    <source>
        <strain>SH0165</strain>
    </source>
</reference>
<keyword id="KW-1003">Cell membrane</keyword>
<keyword id="KW-0472">Membrane</keyword>
<keyword id="KW-1185">Reference proteome</keyword>
<keyword id="KW-0677">Repeat</keyword>
<keyword id="KW-0812">Transmembrane</keyword>
<keyword id="KW-1133">Transmembrane helix</keyword>
<keyword id="KW-0813">Transport</keyword>
<proteinExistence type="inferred from homology"/>
<feature type="chain" id="PRO_1000149002" description="Putative transport protein HAPS_0158">
    <location>
        <begin position="1"/>
        <end position="552"/>
    </location>
</feature>
<feature type="transmembrane region" description="Helical" evidence="1">
    <location>
        <begin position="4"/>
        <end position="24"/>
    </location>
</feature>
<feature type="transmembrane region" description="Helical" evidence="1">
    <location>
        <begin position="28"/>
        <end position="48"/>
    </location>
</feature>
<feature type="transmembrane region" description="Helical" evidence="1">
    <location>
        <begin position="65"/>
        <end position="85"/>
    </location>
</feature>
<feature type="transmembrane region" description="Helical" evidence="1">
    <location>
        <begin position="95"/>
        <end position="115"/>
    </location>
</feature>
<feature type="transmembrane region" description="Helical" evidence="1">
    <location>
        <begin position="157"/>
        <end position="177"/>
    </location>
</feature>
<feature type="transmembrane region" description="Helical" evidence="1">
    <location>
        <begin position="370"/>
        <end position="390"/>
    </location>
</feature>
<feature type="transmembrane region" description="Helical" evidence="1">
    <location>
        <begin position="393"/>
        <end position="413"/>
    </location>
</feature>
<feature type="transmembrane region" description="Helical" evidence="1">
    <location>
        <begin position="438"/>
        <end position="458"/>
    </location>
</feature>
<feature type="transmembrane region" description="Helical" evidence="1">
    <location>
        <begin position="463"/>
        <end position="483"/>
    </location>
</feature>
<feature type="transmembrane region" description="Helical" evidence="1">
    <location>
        <begin position="492"/>
        <end position="512"/>
    </location>
</feature>
<feature type="transmembrane region" description="Helical" evidence="1">
    <location>
        <begin position="532"/>
        <end position="552"/>
    </location>
</feature>
<feature type="domain" description="RCK C-terminal 1" evidence="1">
    <location>
        <begin position="193"/>
        <end position="275"/>
    </location>
</feature>
<feature type="domain" description="RCK C-terminal 2" evidence="1">
    <location>
        <begin position="277"/>
        <end position="360"/>
    </location>
</feature>
<dbReference type="EMBL" id="CP001321">
    <property type="protein sequence ID" value="ACL31854.1"/>
    <property type="molecule type" value="Genomic_DNA"/>
</dbReference>
<dbReference type="RefSeq" id="WP_012621585.1">
    <property type="nucleotide sequence ID" value="NC_011852.1"/>
</dbReference>
<dbReference type="SMR" id="B8F3F2"/>
<dbReference type="STRING" id="557723.HAPS_0158"/>
<dbReference type="KEGG" id="hap:HAPS_0158"/>
<dbReference type="HOGENOM" id="CLU_035023_3_1_6"/>
<dbReference type="Proteomes" id="UP000006743">
    <property type="component" value="Chromosome"/>
</dbReference>
<dbReference type="GO" id="GO:0005886">
    <property type="term" value="C:plasma membrane"/>
    <property type="evidence" value="ECO:0007669"/>
    <property type="project" value="UniProtKB-SubCell"/>
</dbReference>
<dbReference type="GO" id="GO:0008324">
    <property type="term" value="F:monoatomic cation transmembrane transporter activity"/>
    <property type="evidence" value="ECO:0007669"/>
    <property type="project" value="InterPro"/>
</dbReference>
<dbReference type="GO" id="GO:0006813">
    <property type="term" value="P:potassium ion transport"/>
    <property type="evidence" value="ECO:0007669"/>
    <property type="project" value="InterPro"/>
</dbReference>
<dbReference type="Gene3D" id="3.30.70.1450">
    <property type="entry name" value="Regulator of K+ conductance, C-terminal domain"/>
    <property type="match status" value="2"/>
</dbReference>
<dbReference type="HAMAP" id="MF_01016">
    <property type="entry name" value="YidE"/>
    <property type="match status" value="1"/>
</dbReference>
<dbReference type="InterPro" id="IPR050144">
    <property type="entry name" value="AAE_transporter"/>
</dbReference>
<dbReference type="InterPro" id="IPR006037">
    <property type="entry name" value="RCK_C"/>
</dbReference>
<dbReference type="InterPro" id="IPR036721">
    <property type="entry name" value="RCK_C_sf"/>
</dbReference>
<dbReference type="InterPro" id="IPR023018">
    <property type="entry name" value="Transpt_YidE_put"/>
</dbReference>
<dbReference type="InterPro" id="IPR006512">
    <property type="entry name" value="YidE_YbjL"/>
</dbReference>
<dbReference type="NCBIfam" id="NF003007">
    <property type="entry name" value="PRK03818.1"/>
    <property type="match status" value="1"/>
</dbReference>
<dbReference type="NCBIfam" id="TIGR01625">
    <property type="entry name" value="YidE_YbjL_dupl"/>
    <property type="match status" value="2"/>
</dbReference>
<dbReference type="PANTHER" id="PTHR30445">
    <property type="entry name" value="K(+)_H(+) ANTIPORTER SUBUNIT KHTT"/>
    <property type="match status" value="1"/>
</dbReference>
<dbReference type="PANTHER" id="PTHR30445:SF3">
    <property type="entry name" value="TRANSPORT PROTEIN YIDE-RELATED"/>
    <property type="match status" value="1"/>
</dbReference>
<dbReference type="Pfam" id="PF06826">
    <property type="entry name" value="Asp-Al_Ex"/>
    <property type="match status" value="2"/>
</dbReference>
<dbReference type="Pfam" id="PF02080">
    <property type="entry name" value="TrkA_C"/>
    <property type="match status" value="1"/>
</dbReference>
<dbReference type="SUPFAM" id="SSF116726">
    <property type="entry name" value="TrkA C-terminal domain-like"/>
    <property type="match status" value="2"/>
</dbReference>
<dbReference type="PROSITE" id="PS51202">
    <property type="entry name" value="RCK_C"/>
    <property type="match status" value="2"/>
</dbReference>
<name>Y158_GLAP5</name>
<comment type="subcellular location">
    <subcellularLocation>
        <location evidence="1">Cell membrane</location>
        <topology evidence="1">Multi-pass membrane protein</topology>
    </subcellularLocation>
</comment>
<comment type="similarity">
    <text evidence="1">Belongs to the AAE transporter (TC 2.A.81) family. YidE subfamily.</text>
</comment>
<sequence length="552" mass="59481">MSEIALTVSLLSLVAVIGLWIGHIKVRGVSLGIGGVLFGGILVSHFMTQYGVKLDGHTLHFIQEFGLILFVYTIGIQVGPGFFASLRQSGLKLNAFAVMIVGISGILVILLHKIFDVPLPVILGIFSGAVTNTPSLGAGQQILTELGGESITAVMGMGYAIAYPFGIIGILLAMWLIRIIFKINVDKEADEFDSATNNKKDGLSTMNVRITNPNLNGLMLQEFPDFELHEVVYSRIKRNDELFVPKVHTQIQIGDILHLVGTKTALHKMQLILGEEVNVSLSTKGTMYRTERAVVTNEKVFGKQIRQLMLKGKYDVVISRLNRAGVELVPNGQMTLQFGDVLNLVGRQEDIEAVMAIIGNAQQKLQQVQMLPIFIGVGLGVLLGSIPIYLPGFPVALKLGLAGGPLVVALILARIGSIKKLYWFMPPSANLALREIGIVLFLAVVGWKAGGNFLNTLLSNDGLAWIGYGAIITFVPLIVTGLVARIYGKLNYLSLCGLLAGSMTDPPALAFANGIKEGNGAAALSYATVYPLVMFCRIILPQILAILLWVAG</sequence>
<accession>B8F3F2</accession>